<accession>W3XA95</accession>
<proteinExistence type="inferred from homology"/>
<evidence type="ECO:0000255" key="1"/>
<evidence type="ECO:0000269" key="2">
    <source>
    </source>
</evidence>
<evidence type="ECO:0000269" key="3">
    <source>
    </source>
</evidence>
<evidence type="ECO:0000303" key="4">
    <source>
    </source>
</evidence>
<evidence type="ECO:0000305" key="5"/>
<evidence type="ECO:0000305" key="6">
    <source>
    </source>
</evidence>
<evidence type="ECO:0000305" key="7">
    <source>
    </source>
</evidence>
<organism>
    <name type="scientific">Pestalotiopsis fici (strain W106-1 / CGMCC3.15140)</name>
    <dbReference type="NCBI Taxonomy" id="1229662"/>
    <lineage>
        <taxon>Eukaryota</taxon>
        <taxon>Fungi</taxon>
        <taxon>Dikarya</taxon>
        <taxon>Ascomycota</taxon>
        <taxon>Pezizomycotina</taxon>
        <taxon>Sordariomycetes</taxon>
        <taxon>Xylariomycetidae</taxon>
        <taxon>Amphisphaeriales</taxon>
        <taxon>Sporocadaceae</taxon>
        <taxon>Pestalotiopsis</taxon>
    </lineage>
</organism>
<keyword id="KW-0031">Aminopeptidase</keyword>
<keyword id="KW-0378">Hydrolase</keyword>
<keyword id="KW-0470">Melanin biosynthesis</keyword>
<keyword id="KW-0645">Protease</keyword>
<keyword id="KW-1185">Reference proteome</keyword>
<gene>
    <name evidence="4" type="primary">PfmaB</name>
    <name type="ORF">PFICI_07098</name>
</gene>
<comment type="function">
    <text evidence="2 3 6 7">Proline iminopeptidase; part of the gene cluster that mediates the biosynthesis of dihydroxynaphthalene (DHN)-melanin, a bluish-green pigment forming a dark layer in the conidial wall that protects the conidia from UV radiations (PubMed:28517364). The first step of the pathway is the production of the pentaketide 1,3,6,8-tetrahydroxynaphthalene (1,3,6,8-THN or T4HN) by the polyketide synthase PfmaE though condensation of acetyl-CoA with malonyl-CoA. T4HN is not stable and easily oxidizes into the stable form flaviolin (PubMed:28517364). T4HN is also substrate of the hydroxynaphthalene reductase PfmaG to yield scytalone (PubMed:28517364). The scytalone dehydratase PfmaJ then reduces scytalone to 1,3,8-THN (PubMed:31116900). 1,3,8-THN is then substrate of the hydroxynaphthalene reductase PfmaI to yield vermelone (Probable). Vermelone is further converted by the multicopper oxidase PfmaD to 1,8-DHN (Probable). Finally the laccase PFICI_06862 transforms 1,8-DHN to DHN-melanin (Probable). The roles of the 5-oxoprolinase PfmaA and the proline iminopeptidase PfmaB within the cluster have not been elucidated yet (Probable).</text>
</comment>
<comment type="catalytic activity">
    <reaction evidence="6">
        <text>Release of N-terminal proline from a peptide.</text>
        <dbReference type="EC" id="3.4.11.5"/>
    </reaction>
</comment>
<comment type="disruption phenotype">
    <text evidence="2">Does not affect the production of scytalone.</text>
</comment>
<comment type="similarity">
    <text evidence="5">Belongs to the peptidase S33 family.</text>
</comment>
<feature type="chain" id="PRO_0000445350" description="Proline iminopeptidase PfmaB">
    <location>
        <begin position="1"/>
        <end position="281"/>
    </location>
</feature>
<feature type="domain" description="AB hydrolase-1" evidence="1">
    <location>
        <begin position="23"/>
        <end position="267"/>
    </location>
</feature>
<sequence>MVEFVEINGAQLAYRICGPEDAPLVITLHGGRGMGNHQSDFKAFSPLGDSYRILSFDYRGHGQSSRTKPYTFEQIVDDIDGMRARFAGPEKQVIILGGSFGGFLAQQYAIKYASHVSHLILRGTAPSHHHEEGAIKTLEQRLSKVPSFSIEMLKDKVFGAFDSDLEFRMVHLVMSPLYSESFDANAALQSCLNNVYNAESHNDLYSEKEKYFDYTKDLHRITAKTLVVVGDKDWICPPENSKFIAKEIKDAELFLVENANHSVHVEKNDLVVKKIRSHLEK</sequence>
<reference key="1">
    <citation type="journal article" date="2015" name="BMC Genomics">
        <title>Genomic and transcriptomic analysis of the endophytic fungus Pestalotiopsis fici reveals its lifestyle and high potential for synthesis of natural products.</title>
        <authorList>
            <person name="Wang X."/>
            <person name="Zhang X."/>
            <person name="Liu L."/>
            <person name="Xiang M."/>
            <person name="Wang W."/>
            <person name="Sun X."/>
            <person name="Che Y."/>
            <person name="Guo L."/>
            <person name="Liu G."/>
            <person name="Guo L."/>
            <person name="Wang C."/>
            <person name="Yin W.B."/>
            <person name="Stadler M."/>
            <person name="Zhang X."/>
            <person name="Liu X."/>
        </authorList>
    </citation>
    <scope>NUCLEOTIDE SEQUENCE [LARGE SCALE GENOMIC DNA]</scope>
    <source>
        <strain>W106-1 / CGMCC3.15140</strain>
    </source>
</reference>
<reference key="2">
    <citation type="journal article" date="2017" name="Mol. Microbiol.">
        <title>A cryptic pigment biosynthetic pathway uncovered by heterologous expression is essential for conidial development in Pestalotiopsis fici.</title>
        <authorList>
            <person name="Zhang P."/>
            <person name="Wang X."/>
            <person name="Fan A."/>
            <person name="Zheng Y."/>
            <person name="Liu X."/>
            <person name="Wang S."/>
            <person name="Zou H."/>
            <person name="Oakley B.R."/>
            <person name="Keller N.P."/>
            <person name="Yin W.B."/>
        </authorList>
    </citation>
    <scope>FUNCTION</scope>
    <scope>DISRUPTION PHENOTYPE</scope>
</reference>
<reference key="3">
    <citation type="journal article" date="2019" name="Mol. Microbiol.">
        <title>Two transcription factors cooperatively regulate DHN melanin biosynthesis and development in Pestalotiopsis fici.</title>
        <authorList>
            <person name="Zhang P."/>
            <person name="Zhou S."/>
            <person name="Wang G."/>
            <person name="An Z."/>
            <person name="Liu X."/>
            <person name="Li K."/>
            <person name="Yin W.B."/>
        </authorList>
    </citation>
    <scope>FUNCTION</scope>
</reference>
<dbReference type="EC" id="3.4.11.5" evidence="6"/>
<dbReference type="EMBL" id="KI912112">
    <property type="protein sequence ID" value="ETS82096.1"/>
    <property type="molecule type" value="Genomic_DNA"/>
</dbReference>
<dbReference type="RefSeq" id="XP_007833870.1">
    <property type="nucleotide sequence ID" value="XM_007835679.1"/>
</dbReference>
<dbReference type="SMR" id="W3XA95"/>
<dbReference type="ESTHER" id="pesfw-pfmab">
    <property type="family name" value="Proline_iminopeptidase"/>
</dbReference>
<dbReference type="GeneID" id="19272111"/>
<dbReference type="KEGG" id="pfy:PFICI_07098"/>
<dbReference type="eggNOG" id="ENOG502QPPY">
    <property type="taxonomic scope" value="Eukaryota"/>
</dbReference>
<dbReference type="HOGENOM" id="CLU_020336_50_0_1"/>
<dbReference type="InParanoid" id="W3XA95"/>
<dbReference type="OMA" id="EKYFDYT"/>
<dbReference type="OrthoDB" id="408373at2759"/>
<dbReference type="Proteomes" id="UP000030651">
    <property type="component" value="Unassembled WGS sequence"/>
</dbReference>
<dbReference type="GO" id="GO:0016020">
    <property type="term" value="C:membrane"/>
    <property type="evidence" value="ECO:0007669"/>
    <property type="project" value="TreeGrafter"/>
</dbReference>
<dbReference type="GO" id="GO:0004177">
    <property type="term" value="F:aminopeptidase activity"/>
    <property type="evidence" value="ECO:0007669"/>
    <property type="project" value="UniProtKB-KW"/>
</dbReference>
<dbReference type="GO" id="GO:0042438">
    <property type="term" value="P:melanin biosynthetic process"/>
    <property type="evidence" value="ECO:0007669"/>
    <property type="project" value="UniProtKB-KW"/>
</dbReference>
<dbReference type="GO" id="GO:0006508">
    <property type="term" value="P:proteolysis"/>
    <property type="evidence" value="ECO:0007669"/>
    <property type="project" value="UniProtKB-KW"/>
</dbReference>
<dbReference type="Gene3D" id="3.40.50.1820">
    <property type="entry name" value="alpha/beta hydrolase"/>
    <property type="match status" value="1"/>
</dbReference>
<dbReference type="InterPro" id="IPR000073">
    <property type="entry name" value="AB_hydrolase_1"/>
</dbReference>
<dbReference type="InterPro" id="IPR029058">
    <property type="entry name" value="AB_hydrolase_fold"/>
</dbReference>
<dbReference type="InterPro" id="IPR050266">
    <property type="entry name" value="AB_hydrolase_sf"/>
</dbReference>
<dbReference type="InterPro" id="IPR002410">
    <property type="entry name" value="Peptidase_S33"/>
</dbReference>
<dbReference type="PANTHER" id="PTHR43798:SF33">
    <property type="entry name" value="HYDROLASE, PUTATIVE (AFU_ORTHOLOGUE AFUA_2G14860)-RELATED"/>
    <property type="match status" value="1"/>
</dbReference>
<dbReference type="PANTHER" id="PTHR43798">
    <property type="entry name" value="MONOACYLGLYCEROL LIPASE"/>
    <property type="match status" value="1"/>
</dbReference>
<dbReference type="Pfam" id="PF00561">
    <property type="entry name" value="Abhydrolase_1"/>
    <property type="match status" value="1"/>
</dbReference>
<dbReference type="PRINTS" id="PR00111">
    <property type="entry name" value="ABHYDROLASE"/>
</dbReference>
<dbReference type="PRINTS" id="PR00793">
    <property type="entry name" value="PROAMNOPTASE"/>
</dbReference>
<dbReference type="SUPFAM" id="SSF53474">
    <property type="entry name" value="alpha/beta-Hydrolases"/>
    <property type="match status" value="1"/>
</dbReference>
<protein>
    <recommendedName>
        <fullName evidence="4">Proline iminopeptidase PfmaB</fullName>
        <shortName evidence="4">PIP</shortName>
        <ecNumber evidence="6">3.4.11.5</ecNumber>
    </recommendedName>
    <alternativeName>
        <fullName evidence="4">Conidial pigment biosynthesis cluster protein B</fullName>
    </alternativeName>
</protein>
<name>PFMAB_PESFW</name>